<reference key="1">
    <citation type="journal article" date="1995" name="Plant J.">
        <title>A dinucleotide mutation in dihydrodipicolinate synthase of Nicotiana sylvestris leads to lysine overproduction.</title>
        <authorList>
            <person name="Ghislain M."/>
            <person name="Frankard V."/>
            <person name="Jacobs M."/>
        </authorList>
    </citation>
    <scope>NUCLEOTIDE SEQUENCE [MRNA]</scope>
    <source>
        <strain>cv. Verginiana</strain>
    </source>
</reference>
<comment type="function">
    <text evidence="1">Catalyzes the condensation of (S)-aspartate-beta-semialdehyde [(S)-ASA] and pyruvate to 4-hydroxy-tetrahydrodipicolinate (HTPA).</text>
</comment>
<comment type="catalytic activity">
    <reaction>
        <text>L-aspartate 4-semialdehyde + pyruvate = (2S,4S)-4-hydroxy-2,3,4,5-tetrahydrodipicolinate + H2O + H(+)</text>
        <dbReference type="Rhea" id="RHEA:34171"/>
        <dbReference type="ChEBI" id="CHEBI:15361"/>
        <dbReference type="ChEBI" id="CHEBI:15377"/>
        <dbReference type="ChEBI" id="CHEBI:15378"/>
        <dbReference type="ChEBI" id="CHEBI:67139"/>
        <dbReference type="ChEBI" id="CHEBI:537519"/>
        <dbReference type="EC" id="4.3.3.7"/>
    </reaction>
</comment>
<comment type="pathway">
    <text>Amino-acid biosynthesis; L-lysine biosynthesis via DAP pathway; (S)-tetrahydrodipicolinate from L-aspartate: step 3/4.</text>
</comment>
<comment type="subcellular location">
    <subcellularLocation>
        <location>Plastid</location>
        <location>Chloroplast</location>
    </subcellularLocation>
</comment>
<comment type="similarity">
    <text evidence="3">Belongs to the DapA family.</text>
</comment>
<comment type="caution">
    <text evidence="3">Was originally thought to be a dihydrodipicolinate synthase (DHDPS), catalyzing the condensation of (S)-aspartate-beta-semialdehyde [(S)-ASA] and pyruvate to dihydrodipicolinate (DHDP). However, it was shown in E.coli that the product of the enzymatic reaction is not dihydrodipicolinate but in fact (4S)-4-hydroxy-2,3,4,5-tetrahydro-(2S)-dipicolinic acid (HTPA), and that the consecutive dehydration reaction leading to DHDP is not spontaneous but catalyzed by DapB.</text>
</comment>
<gene>
    <name type="primary">DHPS1</name>
</gene>
<organism>
    <name type="scientific">Nicotiana tabacum</name>
    <name type="common">Common tobacco</name>
    <dbReference type="NCBI Taxonomy" id="4097"/>
    <lineage>
        <taxon>Eukaryota</taxon>
        <taxon>Viridiplantae</taxon>
        <taxon>Streptophyta</taxon>
        <taxon>Embryophyta</taxon>
        <taxon>Tracheophyta</taxon>
        <taxon>Spermatophyta</taxon>
        <taxon>Magnoliopsida</taxon>
        <taxon>eudicotyledons</taxon>
        <taxon>Gunneridae</taxon>
        <taxon>Pentapetalae</taxon>
        <taxon>asterids</taxon>
        <taxon>lamiids</taxon>
        <taxon>Solanales</taxon>
        <taxon>Solanaceae</taxon>
        <taxon>Nicotianoideae</taxon>
        <taxon>Nicotianeae</taxon>
        <taxon>Nicotiana</taxon>
    </lineage>
</organism>
<dbReference type="EC" id="4.3.3.7"/>
<dbReference type="EMBL" id="X79675">
    <property type="protein sequence ID" value="CAA56123.1"/>
    <property type="molecule type" value="mRNA"/>
</dbReference>
<dbReference type="PIR" id="T03214">
    <property type="entry name" value="T03214"/>
</dbReference>
<dbReference type="RefSeq" id="NP_001313049.1">
    <property type="nucleotide sequence ID" value="NM_001326120.1"/>
</dbReference>
<dbReference type="SMR" id="Q42948"/>
<dbReference type="STRING" id="4097.Q42948"/>
<dbReference type="PaxDb" id="4097-Q42948"/>
<dbReference type="GeneID" id="107823498"/>
<dbReference type="KEGG" id="nta:107823498"/>
<dbReference type="OrthoDB" id="191315at2759"/>
<dbReference type="PhylomeDB" id="Q42948"/>
<dbReference type="UniPathway" id="UPA00034">
    <property type="reaction ID" value="UER00017"/>
</dbReference>
<dbReference type="Proteomes" id="UP000084051">
    <property type="component" value="Unplaced"/>
</dbReference>
<dbReference type="GO" id="GO:0009507">
    <property type="term" value="C:chloroplast"/>
    <property type="evidence" value="ECO:0007669"/>
    <property type="project" value="UniProtKB-SubCell"/>
</dbReference>
<dbReference type="GO" id="GO:0008840">
    <property type="term" value="F:4-hydroxy-tetrahydrodipicolinate synthase activity"/>
    <property type="evidence" value="ECO:0000318"/>
    <property type="project" value="GO_Central"/>
</dbReference>
<dbReference type="GO" id="GO:0019877">
    <property type="term" value="P:diaminopimelate biosynthetic process"/>
    <property type="evidence" value="ECO:0007669"/>
    <property type="project" value="UniProtKB-KW"/>
</dbReference>
<dbReference type="GO" id="GO:0009089">
    <property type="term" value="P:lysine biosynthetic process via diaminopimelate"/>
    <property type="evidence" value="ECO:0007669"/>
    <property type="project" value="UniProtKB-UniPathway"/>
</dbReference>
<dbReference type="CDD" id="cd00950">
    <property type="entry name" value="DHDPS"/>
    <property type="match status" value="1"/>
</dbReference>
<dbReference type="Gene3D" id="3.20.20.70">
    <property type="entry name" value="Aldolase class I"/>
    <property type="match status" value="1"/>
</dbReference>
<dbReference type="InterPro" id="IPR013785">
    <property type="entry name" value="Aldolase_TIM"/>
</dbReference>
<dbReference type="InterPro" id="IPR005263">
    <property type="entry name" value="DapA"/>
</dbReference>
<dbReference type="InterPro" id="IPR002220">
    <property type="entry name" value="DapA-like"/>
</dbReference>
<dbReference type="InterPro" id="IPR020625">
    <property type="entry name" value="Schiff_base-form_aldolases_AS"/>
</dbReference>
<dbReference type="InterPro" id="IPR020624">
    <property type="entry name" value="Schiff_base-form_aldolases_CS"/>
</dbReference>
<dbReference type="NCBIfam" id="TIGR00674">
    <property type="entry name" value="dapA"/>
    <property type="match status" value="1"/>
</dbReference>
<dbReference type="PANTHER" id="PTHR12128:SF15">
    <property type="entry name" value="4-HYDROXY-TETRAHYDRODIPICOLINATE SYNTHASE 1, CHLOROPLASTIC"/>
    <property type="match status" value="1"/>
</dbReference>
<dbReference type="PANTHER" id="PTHR12128">
    <property type="entry name" value="DIHYDRODIPICOLINATE SYNTHASE"/>
    <property type="match status" value="1"/>
</dbReference>
<dbReference type="Pfam" id="PF00701">
    <property type="entry name" value="DHDPS"/>
    <property type="match status" value="1"/>
</dbReference>
<dbReference type="PRINTS" id="PR00146">
    <property type="entry name" value="DHPICSNTHASE"/>
</dbReference>
<dbReference type="SMART" id="SM01130">
    <property type="entry name" value="DHDPS"/>
    <property type="match status" value="1"/>
</dbReference>
<dbReference type="SUPFAM" id="SSF51569">
    <property type="entry name" value="Aldolase"/>
    <property type="match status" value="1"/>
</dbReference>
<dbReference type="PROSITE" id="PS00665">
    <property type="entry name" value="DHDPS_1"/>
    <property type="match status" value="1"/>
</dbReference>
<dbReference type="PROSITE" id="PS00666">
    <property type="entry name" value="DHDPS_2"/>
    <property type="match status" value="1"/>
</dbReference>
<protein>
    <recommendedName>
        <fullName>4-hydroxy-tetrahydrodipicolinate synthase, chloroplastic</fullName>
        <shortName>HTPA synthase</shortName>
        <ecNumber>4.3.3.7</ecNumber>
    </recommendedName>
</protein>
<keyword id="KW-0028">Amino-acid biosynthesis</keyword>
<keyword id="KW-0150">Chloroplast</keyword>
<keyword id="KW-0220">Diaminopimelate biosynthesis</keyword>
<keyword id="KW-0456">Lyase</keyword>
<keyword id="KW-0457">Lysine biosynthesis</keyword>
<keyword id="KW-0934">Plastid</keyword>
<keyword id="KW-1185">Reference proteome</keyword>
<keyword id="KW-0704">Schiff base</keyword>
<keyword id="KW-0809">Transit peptide</keyword>
<sequence length="359" mass="39576">MSSSIIGRCHFVADSIEAAGTKRRTTRWRSPRAAVIPSFHLPMRSNEVKNRTFADDIKALRLITAIKTPYLPDGRFDLEAYDTLVNLQIENGAEGVIVGGTTGEGQLMSWDEHIMLIGHTVNCFGGSIKVIGNTGSNSTREAIHATEQGFAVGMHAALHINPYYGKTSLEGLISHFESVLPMGPTIIYNVPSRTGQDIPPRVIQTMAKSPNLAGVKECVGNDRVEQYTSDGVVVWSGNDDECHVSRWDYGATGVISVTSNLVPGLMRELMFGGKNPALNSKLMPLMEWLFHEPNPIALNTALAQLGVVRPVFRLPYVPLTKAKREEFVKIVKEIGRENFIGERDVQILDDNDFILVGRY</sequence>
<evidence type="ECO:0000250" key="1"/>
<evidence type="ECO:0000255" key="2"/>
<evidence type="ECO:0000305" key="3"/>
<proteinExistence type="evidence at transcript level"/>
<feature type="transit peptide" description="Chloroplast" evidence="2">
    <location>
        <begin position="1"/>
        <end position="33"/>
    </location>
</feature>
<feature type="chain" id="PRO_0000007202" description="4-hydroxy-tetrahydrodipicolinate synthase, chloroplastic">
    <location>
        <begin position="34"/>
        <end position="359"/>
    </location>
</feature>
<feature type="active site" description="Proton donor/acceptor" evidence="1">
    <location>
        <position position="188"/>
    </location>
</feature>
<feature type="active site" description="Schiff-base intermediate with substrate" evidence="1">
    <location>
        <position position="216"/>
    </location>
</feature>
<feature type="binding site" evidence="1">
    <location>
        <position position="102"/>
    </location>
    <ligand>
        <name>pyruvate</name>
        <dbReference type="ChEBI" id="CHEBI:15361"/>
    </ligand>
</feature>
<feature type="binding site" evidence="1">
    <location>
        <position position="255"/>
    </location>
    <ligand>
        <name>pyruvate</name>
        <dbReference type="ChEBI" id="CHEBI:15361"/>
    </ligand>
</feature>
<feature type="site" description="Part of a proton relay during catalysis" evidence="1">
    <location>
        <position position="101"/>
    </location>
</feature>
<feature type="site" description="Part of a proton relay during catalysis" evidence="1">
    <location>
        <position position="164"/>
    </location>
</feature>
<name>DAPA_TOBAC</name>
<accession>Q42948</accession>